<comment type="function">
    <text evidence="1">UDP-glucuronosyltransferases catalyze phase II biotransformation reactions in which lipophilic substrates are conjugated with glucuronic acid to increase water solubility and enhance excretion. They are of major importance in the conjugation and subsequent elimination of potentially toxic xenobiotics and endogenous compounds (By similarity).</text>
</comment>
<comment type="catalytic activity">
    <reaction>
        <text>glucuronate acceptor + UDP-alpha-D-glucuronate = acceptor beta-D-glucuronoside + UDP + H(+)</text>
        <dbReference type="Rhea" id="RHEA:21032"/>
        <dbReference type="ChEBI" id="CHEBI:15378"/>
        <dbReference type="ChEBI" id="CHEBI:58052"/>
        <dbReference type="ChEBI" id="CHEBI:58223"/>
        <dbReference type="ChEBI" id="CHEBI:132367"/>
        <dbReference type="ChEBI" id="CHEBI:132368"/>
        <dbReference type="EC" id="2.4.1.17"/>
    </reaction>
</comment>
<comment type="subcellular location">
    <subcellularLocation>
        <location evidence="3">Membrane</location>
        <topology evidence="3">Single-pass type I membrane protein</topology>
    </subcellularLocation>
</comment>
<comment type="similarity">
    <text evidence="3">Belongs to the UDP-glycosyltransferase family.</text>
</comment>
<comment type="sequence caution" evidence="3">
    <conflict type="erroneous initiation">
        <sequence resource="EMBL-CDS" id="BAB15179"/>
    </conflict>
    <text>Truncated N-terminus.</text>
</comment>
<keyword id="KW-0325">Glycoprotein</keyword>
<keyword id="KW-0328">Glycosyltransferase</keyword>
<keyword id="KW-0472">Membrane</keyword>
<keyword id="KW-1267">Proteomics identification</keyword>
<keyword id="KW-1185">Reference proteome</keyword>
<keyword id="KW-0732">Signal</keyword>
<keyword id="KW-0808">Transferase</keyword>
<keyword id="KW-0812">Transmembrane</keyword>
<keyword id="KW-1133">Transmembrane helix</keyword>
<accession>Q6UWM9</accession>
<accession>Q9H6S4</accession>
<protein>
    <recommendedName>
        <fullName>UDP-glucuronosyltransferase 2A3</fullName>
        <shortName>UDPGT 2A3</shortName>
        <ecNumber>2.4.1.17</ecNumber>
    </recommendedName>
</protein>
<sequence>MRSDKSALVFLLLQLFCVGCGFCGKVLVWPCDMSHWLNVKVILEELIVRGHEVTVLTHSKPSLIDYRKPSALKFEVVHMPQDRTEENEIFVDLALNVLPGLSTWQSVIKLNDFFVEIRGTLKMMCESFIYNQTLMKKLQETNYDVMLIDPVIPCGDLMAELLAVPFVLTLRISVGGNMERSCGKLPAPLSYVPVPMTGLTDRMTFLERVKNSMLSVLFHFWIQDYDYHFWEEFYSKALGRPTTLCETVGKAEIWLIRTYWDFEFPQPYQPNFEFVGGLHCKPAKALPKEMENFVQSSGEDGIVVFSLGSLFQNVTEEKANIIASALAQIPQKVLWRYKGKKPSTLGANTRLYDWIPQNDLLGHPKTKAFITHGGMNGIYEAIYHGVPMVGVPIFGDQLDNIAHMKAKGAAVEINFKTMTSEDLLRALRTVITDSSYKENAMRLSRIHHDQPVKPLDRAVFWIEFVMRHKGAKHLRSAAHDLTWFQHYSIDVIGFLLACVATAIFLFTKCFLFSCQKFNKTRKIEKRE</sequence>
<evidence type="ECO:0000250" key="1"/>
<evidence type="ECO:0000255" key="2"/>
<evidence type="ECO:0000305" key="3"/>
<dbReference type="EC" id="2.4.1.17"/>
<dbReference type="EMBL" id="AY542891">
    <property type="protein sequence ID" value="AAS48425.1"/>
    <property type="molecule type" value="mRNA"/>
</dbReference>
<dbReference type="EMBL" id="AY358727">
    <property type="protein sequence ID" value="AAQ89089.1"/>
    <property type="molecule type" value="mRNA"/>
</dbReference>
<dbReference type="EMBL" id="AC021146">
    <property type="status" value="NOT_ANNOTATED_CDS"/>
    <property type="molecule type" value="Genomic_DNA"/>
</dbReference>
<dbReference type="EMBL" id="BC130533">
    <property type="protein sequence ID" value="AAI30534.1"/>
    <property type="molecule type" value="mRNA"/>
</dbReference>
<dbReference type="EMBL" id="AK025587">
    <property type="protein sequence ID" value="BAB15179.1"/>
    <property type="status" value="ALT_INIT"/>
    <property type="molecule type" value="mRNA"/>
</dbReference>
<dbReference type="CCDS" id="CCDS3525.1"/>
<dbReference type="RefSeq" id="NP_079019.3">
    <property type="nucleotide sequence ID" value="NM_024743.3"/>
</dbReference>
<dbReference type="SMR" id="Q6UWM9"/>
<dbReference type="BioGRID" id="122896">
    <property type="interactions" value="6"/>
</dbReference>
<dbReference type="FunCoup" id="Q6UWM9">
    <property type="interactions" value="325"/>
</dbReference>
<dbReference type="IntAct" id="Q6UWM9">
    <property type="interactions" value="4"/>
</dbReference>
<dbReference type="MINT" id="Q6UWM9"/>
<dbReference type="STRING" id="9606.ENSP00000251566"/>
<dbReference type="ChEMBL" id="CHEMBL4523985"/>
<dbReference type="CAZy" id="GT1">
    <property type="family name" value="Glycosyltransferase Family 1"/>
</dbReference>
<dbReference type="GlyCosmos" id="Q6UWM9">
    <property type="glycosylation" value="1 site, No reported glycans"/>
</dbReference>
<dbReference type="GlyGen" id="Q6UWM9">
    <property type="glycosylation" value="4 sites, 18 N-linked glycans (2 sites), 1 O-linked glycan (2 sites)"/>
</dbReference>
<dbReference type="iPTMnet" id="Q6UWM9"/>
<dbReference type="PhosphoSitePlus" id="Q6UWM9"/>
<dbReference type="BioMuta" id="UGT2A3"/>
<dbReference type="DMDM" id="296452855"/>
<dbReference type="jPOST" id="Q6UWM9"/>
<dbReference type="MassIVE" id="Q6UWM9"/>
<dbReference type="PaxDb" id="9606-ENSP00000251566"/>
<dbReference type="PeptideAtlas" id="Q6UWM9"/>
<dbReference type="ProteomicsDB" id="67501"/>
<dbReference type="Antibodypedia" id="24205">
    <property type="antibodies" value="126 antibodies from 19 providers"/>
</dbReference>
<dbReference type="DNASU" id="79799"/>
<dbReference type="Ensembl" id="ENST00000251566.9">
    <property type="protein sequence ID" value="ENSP00000251566.4"/>
    <property type="gene ID" value="ENSG00000135220.11"/>
</dbReference>
<dbReference type="Ensembl" id="ENST00000611042.3">
    <property type="protein sequence ID" value="ENSP00000479283.1"/>
    <property type="gene ID" value="ENSG00000278216.3"/>
</dbReference>
<dbReference type="GeneID" id="79799"/>
<dbReference type="KEGG" id="hsa:79799"/>
<dbReference type="MANE-Select" id="ENST00000251566.9">
    <property type="protein sequence ID" value="ENSP00000251566.4"/>
    <property type="RefSeq nucleotide sequence ID" value="NM_024743.4"/>
    <property type="RefSeq protein sequence ID" value="NP_079019.3"/>
</dbReference>
<dbReference type="UCSC" id="uc003hef.3">
    <property type="organism name" value="human"/>
</dbReference>
<dbReference type="AGR" id="HGNC:28528"/>
<dbReference type="CTD" id="79799"/>
<dbReference type="DisGeNET" id="79799"/>
<dbReference type="GeneCards" id="UGT2A3"/>
<dbReference type="HGNC" id="HGNC:28528">
    <property type="gene designation" value="UGT2A3"/>
</dbReference>
<dbReference type="HPA" id="ENSG00000135220">
    <property type="expression patterns" value="Group enriched (intestine, kidney, liver, pancreas)"/>
</dbReference>
<dbReference type="MIM" id="616382">
    <property type="type" value="gene"/>
</dbReference>
<dbReference type="neXtProt" id="NX_Q6UWM9"/>
<dbReference type="OpenTargets" id="ENSG00000135220"/>
<dbReference type="PharmGKB" id="PA142670641"/>
<dbReference type="VEuPathDB" id="HostDB:ENSG00000135220"/>
<dbReference type="eggNOG" id="KOG1192">
    <property type="taxonomic scope" value="Eukaryota"/>
</dbReference>
<dbReference type="GeneTree" id="ENSGT00940000162432"/>
<dbReference type="HOGENOM" id="CLU_012949_3_0_1"/>
<dbReference type="InParanoid" id="Q6UWM9"/>
<dbReference type="OMA" id="QLFCVGC"/>
<dbReference type="OrthoDB" id="5835829at2759"/>
<dbReference type="PAN-GO" id="Q6UWM9">
    <property type="GO annotations" value="1 GO annotation based on evolutionary models"/>
</dbReference>
<dbReference type="PhylomeDB" id="Q6UWM9"/>
<dbReference type="TreeFam" id="TF315472"/>
<dbReference type="BRENDA" id="2.4.1.17">
    <property type="organism ID" value="2681"/>
</dbReference>
<dbReference type="PathwayCommons" id="Q6UWM9"/>
<dbReference type="Reactome" id="R-HSA-156588">
    <property type="pathway name" value="Glucuronidation"/>
</dbReference>
<dbReference type="Reactome" id="R-HSA-9749641">
    <property type="pathway name" value="Aspirin ADME"/>
</dbReference>
<dbReference type="SignaLink" id="Q6UWM9"/>
<dbReference type="BioGRID-ORCS" id="79799">
    <property type="hits" value="14 hits in 1107 CRISPR screens"/>
</dbReference>
<dbReference type="GenomeRNAi" id="79799"/>
<dbReference type="Pharos" id="Q6UWM9">
    <property type="development level" value="Tbio"/>
</dbReference>
<dbReference type="PRO" id="PR:Q6UWM9"/>
<dbReference type="Proteomes" id="UP000005640">
    <property type="component" value="Chromosome 4"/>
</dbReference>
<dbReference type="RNAct" id="Q6UWM9">
    <property type="molecule type" value="protein"/>
</dbReference>
<dbReference type="Bgee" id="ENSG00000135220">
    <property type="expression patterns" value="Expressed in duodenum and 34 other cell types or tissues"/>
</dbReference>
<dbReference type="ExpressionAtlas" id="Q6UWM9">
    <property type="expression patterns" value="baseline and differential"/>
</dbReference>
<dbReference type="GO" id="GO:0016020">
    <property type="term" value="C:membrane"/>
    <property type="evidence" value="ECO:0007669"/>
    <property type="project" value="UniProtKB-SubCell"/>
</dbReference>
<dbReference type="GO" id="GO:0015020">
    <property type="term" value="F:glucuronosyltransferase activity"/>
    <property type="evidence" value="ECO:0000314"/>
    <property type="project" value="UniProtKB"/>
</dbReference>
<dbReference type="GO" id="GO:0006805">
    <property type="term" value="P:xenobiotic metabolic process"/>
    <property type="evidence" value="ECO:0000314"/>
    <property type="project" value="BHF-UCL"/>
</dbReference>
<dbReference type="CDD" id="cd03784">
    <property type="entry name" value="GT1_Gtf-like"/>
    <property type="match status" value="1"/>
</dbReference>
<dbReference type="FunFam" id="3.40.50.2000:FF:000001">
    <property type="entry name" value="UDP-glucuronosyltransferase"/>
    <property type="match status" value="1"/>
</dbReference>
<dbReference type="FunFam" id="3.40.50.2000:FF:000081">
    <property type="entry name" value="UDP-glucuronosyltransferase 2A2"/>
    <property type="match status" value="1"/>
</dbReference>
<dbReference type="Gene3D" id="3.40.50.2000">
    <property type="entry name" value="Glycogen Phosphorylase B"/>
    <property type="match status" value="2"/>
</dbReference>
<dbReference type="InterPro" id="IPR050271">
    <property type="entry name" value="UDP-glycosyltransferase"/>
</dbReference>
<dbReference type="InterPro" id="IPR002213">
    <property type="entry name" value="UDP_glucos_trans"/>
</dbReference>
<dbReference type="InterPro" id="IPR035595">
    <property type="entry name" value="UDP_glycos_trans_CS"/>
</dbReference>
<dbReference type="PANTHER" id="PTHR48043">
    <property type="entry name" value="EG:EG0003.4 PROTEIN-RELATED"/>
    <property type="match status" value="1"/>
</dbReference>
<dbReference type="PANTHER" id="PTHR48043:SF137">
    <property type="entry name" value="UDP-GLUCURONOSYLTRANSFERASE 2A3"/>
    <property type="match status" value="1"/>
</dbReference>
<dbReference type="Pfam" id="PF00201">
    <property type="entry name" value="UDPGT"/>
    <property type="match status" value="1"/>
</dbReference>
<dbReference type="SUPFAM" id="SSF53756">
    <property type="entry name" value="UDP-Glycosyltransferase/glycogen phosphorylase"/>
    <property type="match status" value="1"/>
</dbReference>
<dbReference type="PROSITE" id="PS00375">
    <property type="entry name" value="UDPGT"/>
    <property type="match status" value="1"/>
</dbReference>
<name>UD2A3_HUMAN</name>
<proteinExistence type="evidence at protein level"/>
<reference key="1">
    <citation type="submission" date="2004-02" db="EMBL/GenBank/DDBJ databases">
        <title>Cloning of novel human UGTs.</title>
        <authorList>
            <person name="Court M.H."/>
        </authorList>
    </citation>
    <scope>NUCLEOTIDE SEQUENCE [MRNA]</scope>
    <source>
        <tissue>Liver</tissue>
    </source>
</reference>
<reference key="2">
    <citation type="journal article" date="2003" name="Genome Res.">
        <title>The secreted protein discovery initiative (SPDI), a large-scale effort to identify novel human secreted and transmembrane proteins: a bioinformatics assessment.</title>
        <authorList>
            <person name="Clark H.F."/>
            <person name="Gurney A.L."/>
            <person name="Abaya E."/>
            <person name="Baker K."/>
            <person name="Baldwin D.T."/>
            <person name="Brush J."/>
            <person name="Chen J."/>
            <person name="Chow B."/>
            <person name="Chui C."/>
            <person name="Crowley C."/>
            <person name="Currell B."/>
            <person name="Deuel B."/>
            <person name="Dowd P."/>
            <person name="Eaton D."/>
            <person name="Foster J.S."/>
            <person name="Grimaldi C."/>
            <person name="Gu Q."/>
            <person name="Hass P.E."/>
            <person name="Heldens S."/>
            <person name="Huang A."/>
            <person name="Kim H.S."/>
            <person name="Klimowski L."/>
            <person name="Jin Y."/>
            <person name="Johnson S."/>
            <person name="Lee J."/>
            <person name="Lewis L."/>
            <person name="Liao D."/>
            <person name="Mark M.R."/>
            <person name="Robbie E."/>
            <person name="Sanchez C."/>
            <person name="Schoenfeld J."/>
            <person name="Seshagiri S."/>
            <person name="Simmons L."/>
            <person name="Singh J."/>
            <person name="Smith V."/>
            <person name="Stinson J."/>
            <person name="Vagts A."/>
            <person name="Vandlen R.L."/>
            <person name="Watanabe C."/>
            <person name="Wieand D."/>
            <person name="Woods K."/>
            <person name="Xie M.-H."/>
            <person name="Yansura D.G."/>
            <person name="Yi S."/>
            <person name="Yu G."/>
            <person name="Yuan J."/>
            <person name="Zhang M."/>
            <person name="Zhang Z."/>
            <person name="Goddard A.D."/>
            <person name="Wood W.I."/>
            <person name="Godowski P.J."/>
            <person name="Gray A.M."/>
        </authorList>
    </citation>
    <scope>NUCLEOTIDE SEQUENCE [LARGE SCALE MRNA]</scope>
</reference>
<reference key="3">
    <citation type="journal article" date="2005" name="Nature">
        <title>Generation and annotation of the DNA sequences of human chromosomes 2 and 4.</title>
        <authorList>
            <person name="Hillier L.W."/>
            <person name="Graves T.A."/>
            <person name="Fulton R.S."/>
            <person name="Fulton L.A."/>
            <person name="Pepin K.H."/>
            <person name="Minx P."/>
            <person name="Wagner-McPherson C."/>
            <person name="Layman D."/>
            <person name="Wylie K."/>
            <person name="Sekhon M."/>
            <person name="Becker M.C."/>
            <person name="Fewell G.A."/>
            <person name="Delehaunty K.D."/>
            <person name="Miner T.L."/>
            <person name="Nash W.E."/>
            <person name="Kremitzki C."/>
            <person name="Oddy L."/>
            <person name="Du H."/>
            <person name="Sun H."/>
            <person name="Bradshaw-Cordum H."/>
            <person name="Ali J."/>
            <person name="Carter J."/>
            <person name="Cordes M."/>
            <person name="Harris A."/>
            <person name="Isak A."/>
            <person name="van Brunt A."/>
            <person name="Nguyen C."/>
            <person name="Du F."/>
            <person name="Courtney L."/>
            <person name="Kalicki J."/>
            <person name="Ozersky P."/>
            <person name="Abbott S."/>
            <person name="Armstrong J."/>
            <person name="Belter E.A."/>
            <person name="Caruso L."/>
            <person name="Cedroni M."/>
            <person name="Cotton M."/>
            <person name="Davidson T."/>
            <person name="Desai A."/>
            <person name="Elliott G."/>
            <person name="Erb T."/>
            <person name="Fronick C."/>
            <person name="Gaige T."/>
            <person name="Haakenson W."/>
            <person name="Haglund K."/>
            <person name="Holmes A."/>
            <person name="Harkins R."/>
            <person name="Kim K."/>
            <person name="Kruchowski S.S."/>
            <person name="Strong C.M."/>
            <person name="Grewal N."/>
            <person name="Goyea E."/>
            <person name="Hou S."/>
            <person name="Levy A."/>
            <person name="Martinka S."/>
            <person name="Mead K."/>
            <person name="McLellan M.D."/>
            <person name="Meyer R."/>
            <person name="Randall-Maher J."/>
            <person name="Tomlinson C."/>
            <person name="Dauphin-Kohlberg S."/>
            <person name="Kozlowicz-Reilly A."/>
            <person name="Shah N."/>
            <person name="Swearengen-Shahid S."/>
            <person name="Snider J."/>
            <person name="Strong J.T."/>
            <person name="Thompson J."/>
            <person name="Yoakum M."/>
            <person name="Leonard S."/>
            <person name="Pearman C."/>
            <person name="Trani L."/>
            <person name="Radionenko M."/>
            <person name="Waligorski J.E."/>
            <person name="Wang C."/>
            <person name="Rock S.M."/>
            <person name="Tin-Wollam A.-M."/>
            <person name="Maupin R."/>
            <person name="Latreille P."/>
            <person name="Wendl M.C."/>
            <person name="Yang S.-P."/>
            <person name="Pohl C."/>
            <person name="Wallis J.W."/>
            <person name="Spieth J."/>
            <person name="Bieri T.A."/>
            <person name="Berkowicz N."/>
            <person name="Nelson J.O."/>
            <person name="Osborne J."/>
            <person name="Ding L."/>
            <person name="Meyer R."/>
            <person name="Sabo A."/>
            <person name="Shotland Y."/>
            <person name="Sinha P."/>
            <person name="Wohldmann P.E."/>
            <person name="Cook L.L."/>
            <person name="Hickenbotham M.T."/>
            <person name="Eldred J."/>
            <person name="Williams D."/>
            <person name="Jones T.A."/>
            <person name="She X."/>
            <person name="Ciccarelli F.D."/>
            <person name="Izaurralde E."/>
            <person name="Taylor J."/>
            <person name="Schmutz J."/>
            <person name="Myers R.M."/>
            <person name="Cox D.R."/>
            <person name="Huang X."/>
            <person name="McPherson J.D."/>
            <person name="Mardis E.R."/>
            <person name="Clifton S.W."/>
            <person name="Warren W.C."/>
            <person name="Chinwalla A.T."/>
            <person name="Eddy S.R."/>
            <person name="Marra M.A."/>
            <person name="Ovcharenko I."/>
            <person name="Furey T.S."/>
            <person name="Miller W."/>
            <person name="Eichler E.E."/>
            <person name="Bork P."/>
            <person name="Suyama M."/>
            <person name="Torrents D."/>
            <person name="Waterston R.H."/>
            <person name="Wilson R.K."/>
        </authorList>
    </citation>
    <scope>NUCLEOTIDE SEQUENCE [LARGE SCALE GENOMIC DNA]</scope>
</reference>
<reference key="4">
    <citation type="journal article" date="2004" name="Genome Res.">
        <title>The status, quality, and expansion of the NIH full-length cDNA project: the Mammalian Gene Collection (MGC).</title>
        <authorList>
            <consortium name="The MGC Project Team"/>
        </authorList>
    </citation>
    <scope>NUCLEOTIDE SEQUENCE [LARGE SCALE MRNA]</scope>
</reference>
<reference key="5">
    <citation type="journal article" date="2004" name="Nat. Genet.">
        <title>Complete sequencing and characterization of 21,243 full-length human cDNAs.</title>
        <authorList>
            <person name="Ota T."/>
            <person name="Suzuki Y."/>
            <person name="Nishikawa T."/>
            <person name="Otsuki T."/>
            <person name="Sugiyama T."/>
            <person name="Irie R."/>
            <person name="Wakamatsu A."/>
            <person name="Hayashi K."/>
            <person name="Sato H."/>
            <person name="Nagai K."/>
            <person name="Kimura K."/>
            <person name="Makita H."/>
            <person name="Sekine M."/>
            <person name="Obayashi M."/>
            <person name="Nishi T."/>
            <person name="Shibahara T."/>
            <person name="Tanaka T."/>
            <person name="Ishii S."/>
            <person name="Yamamoto J."/>
            <person name="Saito K."/>
            <person name="Kawai Y."/>
            <person name="Isono Y."/>
            <person name="Nakamura Y."/>
            <person name="Nagahari K."/>
            <person name="Murakami K."/>
            <person name="Yasuda T."/>
            <person name="Iwayanagi T."/>
            <person name="Wagatsuma M."/>
            <person name="Shiratori A."/>
            <person name="Sudo H."/>
            <person name="Hosoiri T."/>
            <person name="Kaku Y."/>
            <person name="Kodaira H."/>
            <person name="Kondo H."/>
            <person name="Sugawara M."/>
            <person name="Takahashi M."/>
            <person name="Kanda K."/>
            <person name="Yokoi T."/>
            <person name="Furuya T."/>
            <person name="Kikkawa E."/>
            <person name="Omura Y."/>
            <person name="Abe K."/>
            <person name="Kamihara K."/>
            <person name="Katsuta N."/>
            <person name="Sato K."/>
            <person name="Tanikawa M."/>
            <person name="Yamazaki M."/>
            <person name="Ninomiya K."/>
            <person name="Ishibashi T."/>
            <person name="Yamashita H."/>
            <person name="Murakawa K."/>
            <person name="Fujimori K."/>
            <person name="Tanai H."/>
            <person name="Kimata M."/>
            <person name="Watanabe M."/>
            <person name="Hiraoka S."/>
            <person name="Chiba Y."/>
            <person name="Ishida S."/>
            <person name="Ono Y."/>
            <person name="Takiguchi S."/>
            <person name="Watanabe S."/>
            <person name="Yosida M."/>
            <person name="Hotuta T."/>
            <person name="Kusano J."/>
            <person name="Kanehori K."/>
            <person name="Takahashi-Fujii A."/>
            <person name="Hara H."/>
            <person name="Tanase T.-O."/>
            <person name="Nomura Y."/>
            <person name="Togiya S."/>
            <person name="Komai F."/>
            <person name="Hara R."/>
            <person name="Takeuchi K."/>
            <person name="Arita M."/>
            <person name="Imose N."/>
            <person name="Musashino K."/>
            <person name="Yuuki H."/>
            <person name="Oshima A."/>
            <person name="Sasaki N."/>
            <person name="Aotsuka S."/>
            <person name="Yoshikawa Y."/>
            <person name="Matsunawa H."/>
            <person name="Ichihara T."/>
            <person name="Shiohata N."/>
            <person name="Sano S."/>
            <person name="Moriya S."/>
            <person name="Momiyama H."/>
            <person name="Satoh N."/>
            <person name="Takami S."/>
            <person name="Terashima Y."/>
            <person name="Suzuki O."/>
            <person name="Nakagawa S."/>
            <person name="Senoh A."/>
            <person name="Mizoguchi H."/>
            <person name="Goto Y."/>
            <person name="Shimizu F."/>
            <person name="Wakebe H."/>
            <person name="Hishigaki H."/>
            <person name="Watanabe T."/>
            <person name="Sugiyama A."/>
            <person name="Takemoto M."/>
            <person name="Kawakami B."/>
            <person name="Yamazaki M."/>
            <person name="Watanabe K."/>
            <person name="Kumagai A."/>
            <person name="Itakura S."/>
            <person name="Fukuzumi Y."/>
            <person name="Fujimori Y."/>
            <person name="Komiyama M."/>
            <person name="Tashiro H."/>
            <person name="Tanigami A."/>
            <person name="Fujiwara T."/>
            <person name="Ono T."/>
            <person name="Yamada K."/>
            <person name="Fujii Y."/>
            <person name="Ozaki K."/>
            <person name="Hirao M."/>
            <person name="Ohmori Y."/>
            <person name="Kawabata A."/>
            <person name="Hikiji T."/>
            <person name="Kobatake N."/>
            <person name="Inagaki H."/>
            <person name="Ikema Y."/>
            <person name="Okamoto S."/>
            <person name="Okitani R."/>
            <person name="Kawakami T."/>
            <person name="Noguchi S."/>
            <person name="Itoh T."/>
            <person name="Shigeta K."/>
            <person name="Senba T."/>
            <person name="Matsumura K."/>
            <person name="Nakajima Y."/>
            <person name="Mizuno T."/>
            <person name="Morinaga M."/>
            <person name="Sasaki M."/>
            <person name="Togashi T."/>
            <person name="Oyama M."/>
            <person name="Hata H."/>
            <person name="Watanabe M."/>
            <person name="Komatsu T."/>
            <person name="Mizushima-Sugano J."/>
            <person name="Satoh T."/>
            <person name="Shirai Y."/>
            <person name="Takahashi Y."/>
            <person name="Nakagawa K."/>
            <person name="Okumura K."/>
            <person name="Nagase T."/>
            <person name="Nomura N."/>
            <person name="Kikuchi H."/>
            <person name="Masuho Y."/>
            <person name="Yamashita R."/>
            <person name="Nakai K."/>
            <person name="Yada T."/>
            <person name="Nakamura Y."/>
            <person name="Ohara O."/>
            <person name="Isogai T."/>
            <person name="Sugano S."/>
        </authorList>
    </citation>
    <scope>NUCLEOTIDE SEQUENCE [LARGE SCALE MRNA] OF 56-527</scope>
</reference>
<feature type="signal peptide" evidence="2">
    <location>
        <begin position="1"/>
        <end position="23"/>
    </location>
</feature>
<feature type="chain" id="PRO_0000299146" description="UDP-glucuronosyltransferase 2A3">
    <location>
        <begin position="24"/>
        <end position="527"/>
    </location>
</feature>
<feature type="topological domain" description="Extracellular" evidence="2">
    <location>
        <begin position="24"/>
        <end position="491"/>
    </location>
</feature>
<feature type="transmembrane region" description="Helical" evidence="2">
    <location>
        <begin position="492"/>
        <end position="512"/>
    </location>
</feature>
<feature type="topological domain" description="Cytoplasmic" evidence="2">
    <location>
        <begin position="513"/>
        <end position="527"/>
    </location>
</feature>
<feature type="glycosylation site" description="N-linked (GlcNAc...) asparagine" evidence="2">
    <location>
        <position position="313"/>
    </location>
</feature>
<feature type="sequence conflict" description="In Ref. 1; AAS48425, 2; AAQ89089 and 4; AAI30534." evidence="3" ref="1 2 4">
    <original>A</original>
    <variation>T</variation>
    <location>
        <position position="497"/>
    </location>
</feature>
<gene>
    <name type="primary">UGT2A3</name>
    <name type="ORF">UNQ2559/PRO6239</name>
</gene>
<organism>
    <name type="scientific">Homo sapiens</name>
    <name type="common">Human</name>
    <dbReference type="NCBI Taxonomy" id="9606"/>
    <lineage>
        <taxon>Eukaryota</taxon>
        <taxon>Metazoa</taxon>
        <taxon>Chordata</taxon>
        <taxon>Craniata</taxon>
        <taxon>Vertebrata</taxon>
        <taxon>Euteleostomi</taxon>
        <taxon>Mammalia</taxon>
        <taxon>Eutheria</taxon>
        <taxon>Euarchontoglires</taxon>
        <taxon>Primates</taxon>
        <taxon>Haplorrhini</taxon>
        <taxon>Catarrhini</taxon>
        <taxon>Hominidae</taxon>
        <taxon>Homo</taxon>
    </lineage>
</organism>